<evidence type="ECO:0000255" key="1">
    <source>
        <dbReference type="HAMAP-Rule" id="MF_01114"/>
    </source>
</evidence>
<keyword id="KW-0963">Cytoplasm</keyword>
<name>RECX_CHLL2</name>
<feature type="chain" id="PRO_1000137156" description="Regulatory protein RecX">
    <location>
        <begin position="1"/>
        <end position="159"/>
    </location>
</feature>
<proteinExistence type="inferred from homology"/>
<organism>
    <name type="scientific">Chlorobium limicola (strain DSM 245 / NBRC 103803 / 6330)</name>
    <dbReference type="NCBI Taxonomy" id="290315"/>
    <lineage>
        <taxon>Bacteria</taxon>
        <taxon>Pseudomonadati</taxon>
        <taxon>Chlorobiota</taxon>
        <taxon>Chlorobiia</taxon>
        <taxon>Chlorobiales</taxon>
        <taxon>Chlorobiaceae</taxon>
        <taxon>Chlorobium/Pelodictyon group</taxon>
        <taxon>Chlorobium</taxon>
    </lineage>
</organism>
<dbReference type="EMBL" id="CP001097">
    <property type="protein sequence ID" value="ACD89520.1"/>
    <property type="molecule type" value="Genomic_DNA"/>
</dbReference>
<dbReference type="RefSeq" id="WP_012465401.1">
    <property type="nucleotide sequence ID" value="NC_010803.1"/>
</dbReference>
<dbReference type="SMR" id="B3EFY7"/>
<dbReference type="STRING" id="290315.Clim_0427"/>
<dbReference type="KEGG" id="cli:Clim_0427"/>
<dbReference type="eggNOG" id="COG2137">
    <property type="taxonomic scope" value="Bacteria"/>
</dbReference>
<dbReference type="HOGENOM" id="CLU_066607_3_3_10"/>
<dbReference type="OrthoDB" id="597927at2"/>
<dbReference type="Proteomes" id="UP000008841">
    <property type="component" value="Chromosome"/>
</dbReference>
<dbReference type="GO" id="GO:0005737">
    <property type="term" value="C:cytoplasm"/>
    <property type="evidence" value="ECO:0007669"/>
    <property type="project" value="UniProtKB-SubCell"/>
</dbReference>
<dbReference type="GO" id="GO:0006282">
    <property type="term" value="P:regulation of DNA repair"/>
    <property type="evidence" value="ECO:0007669"/>
    <property type="project" value="UniProtKB-UniRule"/>
</dbReference>
<dbReference type="Gene3D" id="1.10.10.10">
    <property type="entry name" value="Winged helix-like DNA-binding domain superfamily/Winged helix DNA-binding domain"/>
    <property type="match status" value="3"/>
</dbReference>
<dbReference type="HAMAP" id="MF_01114">
    <property type="entry name" value="RecX"/>
    <property type="match status" value="1"/>
</dbReference>
<dbReference type="InterPro" id="IPR053926">
    <property type="entry name" value="RecX_HTH_1st"/>
</dbReference>
<dbReference type="InterPro" id="IPR053924">
    <property type="entry name" value="RecX_HTH_2nd"/>
</dbReference>
<dbReference type="InterPro" id="IPR003783">
    <property type="entry name" value="Regulatory_RecX"/>
</dbReference>
<dbReference type="InterPro" id="IPR036388">
    <property type="entry name" value="WH-like_DNA-bd_sf"/>
</dbReference>
<dbReference type="NCBIfam" id="NF001063">
    <property type="entry name" value="PRK00117.5-3"/>
    <property type="match status" value="1"/>
</dbReference>
<dbReference type="PANTHER" id="PTHR33602">
    <property type="entry name" value="REGULATORY PROTEIN RECX FAMILY PROTEIN"/>
    <property type="match status" value="1"/>
</dbReference>
<dbReference type="PANTHER" id="PTHR33602:SF1">
    <property type="entry name" value="REGULATORY PROTEIN RECX FAMILY PROTEIN"/>
    <property type="match status" value="1"/>
</dbReference>
<dbReference type="Pfam" id="PF21982">
    <property type="entry name" value="RecX_HTH1"/>
    <property type="match status" value="1"/>
</dbReference>
<dbReference type="Pfam" id="PF02631">
    <property type="entry name" value="RecX_HTH2"/>
    <property type="match status" value="1"/>
</dbReference>
<sequence length="159" mass="18329">MADHSKNEAAAYALKLLSLRSHSRFELAGKMLRKGYRKELVEEVLDYLVQKQLIDDEAFAKELIGSRSRRKPVGKRKMQFDLIRKGVPENIADALLKEYDGAELCYRAGVRKAAALKGRDESERKKKLEVFLRNRGFDWPVIKETITRLFQTGPECEND</sequence>
<reference key="1">
    <citation type="submission" date="2008-05" db="EMBL/GenBank/DDBJ databases">
        <title>Complete sequence of Chlorobium limicola DSM 245.</title>
        <authorList>
            <consortium name="US DOE Joint Genome Institute"/>
            <person name="Lucas S."/>
            <person name="Copeland A."/>
            <person name="Lapidus A."/>
            <person name="Glavina del Rio T."/>
            <person name="Dalin E."/>
            <person name="Tice H."/>
            <person name="Bruce D."/>
            <person name="Goodwin L."/>
            <person name="Pitluck S."/>
            <person name="Schmutz J."/>
            <person name="Larimer F."/>
            <person name="Land M."/>
            <person name="Hauser L."/>
            <person name="Kyrpides N."/>
            <person name="Ovchinnikova G."/>
            <person name="Zhao F."/>
            <person name="Li T."/>
            <person name="Liu Z."/>
            <person name="Overmann J."/>
            <person name="Bryant D.A."/>
            <person name="Richardson P."/>
        </authorList>
    </citation>
    <scope>NUCLEOTIDE SEQUENCE [LARGE SCALE GENOMIC DNA]</scope>
    <source>
        <strain>DSM 245 / NBRC 103803 / 6330</strain>
    </source>
</reference>
<comment type="function">
    <text evidence="1">Modulates RecA activity.</text>
</comment>
<comment type="subcellular location">
    <subcellularLocation>
        <location evidence="1">Cytoplasm</location>
    </subcellularLocation>
</comment>
<comment type="similarity">
    <text evidence="1">Belongs to the RecX family.</text>
</comment>
<protein>
    <recommendedName>
        <fullName evidence="1">Regulatory protein RecX</fullName>
    </recommendedName>
</protein>
<gene>
    <name evidence="1" type="primary">recX</name>
    <name type="ordered locus">Clim_0427</name>
</gene>
<accession>B3EFY7</accession>